<organism>
    <name type="scientific">Caulobacter vibrioides (strain NA1000 / CB15N)</name>
    <name type="common">Caulobacter crescentus</name>
    <dbReference type="NCBI Taxonomy" id="565050"/>
    <lineage>
        <taxon>Bacteria</taxon>
        <taxon>Pseudomonadati</taxon>
        <taxon>Pseudomonadota</taxon>
        <taxon>Alphaproteobacteria</taxon>
        <taxon>Caulobacterales</taxon>
        <taxon>Caulobacteraceae</taxon>
        <taxon>Caulobacter</taxon>
    </lineage>
</organism>
<feature type="chain" id="PRO_0000444996" description="FtsZ-localized protein A">
    <location>
        <begin position="1"/>
        <end position="228"/>
    </location>
</feature>
<feature type="domain" description="GST N-terminal" evidence="1">
    <location>
        <begin position="3"/>
        <end position="85"/>
    </location>
</feature>
<feature type="domain" description="GST C-terminal" evidence="2">
    <location>
        <begin position="90"/>
        <end position="223"/>
    </location>
</feature>
<feature type="strand" evidence="10">
    <location>
        <begin position="4"/>
        <end position="9"/>
    </location>
</feature>
<feature type="helix" evidence="10">
    <location>
        <begin position="14"/>
        <end position="25"/>
    </location>
</feature>
<feature type="strand" evidence="10">
    <location>
        <begin position="31"/>
        <end position="34"/>
    </location>
</feature>
<feature type="helix" evidence="10">
    <location>
        <begin position="37"/>
        <end position="39"/>
    </location>
</feature>
<feature type="helix" evidence="10">
    <location>
        <begin position="42"/>
        <end position="45"/>
    </location>
</feature>
<feature type="strand" evidence="10">
    <location>
        <begin position="55"/>
        <end position="60"/>
    </location>
</feature>
<feature type="strand" evidence="10">
    <location>
        <begin position="63"/>
        <end position="68"/>
    </location>
</feature>
<feature type="helix" evidence="10">
    <location>
        <begin position="69"/>
        <end position="80"/>
    </location>
</feature>
<feature type="helix" evidence="10">
    <location>
        <begin position="91"/>
        <end position="105"/>
    </location>
</feature>
<feature type="helix" evidence="10">
    <location>
        <begin position="107"/>
        <end position="111"/>
    </location>
</feature>
<feature type="helix" evidence="10">
    <location>
        <begin position="113"/>
        <end position="119"/>
    </location>
</feature>
<feature type="helix" evidence="10">
    <location>
        <begin position="121"/>
        <end position="125"/>
    </location>
</feature>
<feature type="helix" evidence="10">
    <location>
        <begin position="133"/>
        <end position="154"/>
    </location>
</feature>
<feature type="strand" evidence="10">
    <location>
        <begin position="157"/>
        <end position="159"/>
    </location>
</feature>
<feature type="strand" evidence="10">
    <location>
        <begin position="162"/>
        <end position="164"/>
    </location>
</feature>
<feature type="helix" evidence="10">
    <location>
        <begin position="167"/>
        <end position="181"/>
    </location>
</feature>
<feature type="helix" evidence="10">
    <location>
        <begin position="187"/>
        <end position="189"/>
    </location>
</feature>
<feature type="helix" evidence="10">
    <location>
        <begin position="191"/>
        <end position="201"/>
    </location>
</feature>
<feature type="helix" evidence="10">
    <location>
        <begin position="204"/>
        <end position="206"/>
    </location>
</feature>
<feature type="helix" evidence="10">
    <location>
        <begin position="207"/>
        <end position="211"/>
    </location>
</feature>
<feature type="turn" evidence="10">
    <location>
        <begin position="221"/>
        <end position="224"/>
    </location>
</feature>
<accession>A0A0H3CDY2</accession>
<dbReference type="EMBL" id="CP001340">
    <property type="protein sequence ID" value="ACL97219.2"/>
    <property type="molecule type" value="Genomic_DNA"/>
</dbReference>
<dbReference type="RefSeq" id="WP_010921466.1">
    <property type="nucleotide sequence ID" value="NC_011916.1"/>
</dbReference>
<dbReference type="RefSeq" id="YP_002519127.2">
    <property type="nucleotide sequence ID" value="NC_011916.1"/>
</dbReference>
<dbReference type="PDB" id="5NR1">
    <property type="method" value="X-ray"/>
    <property type="resolution" value="2.00 A"/>
    <property type="chains" value="A=1-228"/>
</dbReference>
<dbReference type="PDBsum" id="5NR1"/>
<dbReference type="SMR" id="A0A0H3CDY2"/>
<dbReference type="GeneID" id="7331950"/>
<dbReference type="KEGG" id="ccs:CCNA_03754"/>
<dbReference type="PATRIC" id="fig|565050.3.peg.3659"/>
<dbReference type="HOGENOM" id="CLU_011226_5_3_5"/>
<dbReference type="OrthoDB" id="9794721at2"/>
<dbReference type="PhylomeDB" id="A0A0H3CDY2"/>
<dbReference type="Proteomes" id="UP000001364">
    <property type="component" value="Chromosome"/>
</dbReference>
<dbReference type="GO" id="GO:0005737">
    <property type="term" value="C:cytoplasm"/>
    <property type="evidence" value="ECO:0007669"/>
    <property type="project" value="UniProtKB-SubCell"/>
</dbReference>
<dbReference type="GO" id="GO:0051301">
    <property type="term" value="P:cell division"/>
    <property type="evidence" value="ECO:0007669"/>
    <property type="project" value="UniProtKB-KW"/>
</dbReference>
<dbReference type="CDD" id="cd00299">
    <property type="entry name" value="GST_C_family"/>
    <property type="match status" value="1"/>
</dbReference>
<dbReference type="CDD" id="cd00570">
    <property type="entry name" value="GST_N_family"/>
    <property type="match status" value="1"/>
</dbReference>
<dbReference type="Gene3D" id="1.20.1050.10">
    <property type="match status" value="1"/>
</dbReference>
<dbReference type="Gene3D" id="3.40.30.10">
    <property type="entry name" value="Glutaredoxin"/>
    <property type="match status" value="1"/>
</dbReference>
<dbReference type="InterPro" id="IPR010987">
    <property type="entry name" value="Glutathione-S-Trfase_C-like"/>
</dbReference>
<dbReference type="InterPro" id="IPR036282">
    <property type="entry name" value="Glutathione-S-Trfase_C_sf"/>
</dbReference>
<dbReference type="InterPro" id="IPR040079">
    <property type="entry name" value="Glutathione_S-Trfase"/>
</dbReference>
<dbReference type="InterPro" id="IPR004045">
    <property type="entry name" value="Glutathione_S-Trfase_N"/>
</dbReference>
<dbReference type="InterPro" id="IPR004046">
    <property type="entry name" value="GST_C"/>
</dbReference>
<dbReference type="InterPro" id="IPR036249">
    <property type="entry name" value="Thioredoxin-like_sf"/>
</dbReference>
<dbReference type="PANTHER" id="PTHR44051:SF8">
    <property type="entry name" value="GLUTATHIONE S-TRANSFERASE GSTA"/>
    <property type="match status" value="1"/>
</dbReference>
<dbReference type="PANTHER" id="PTHR44051">
    <property type="entry name" value="GLUTATHIONE S-TRANSFERASE-RELATED"/>
    <property type="match status" value="1"/>
</dbReference>
<dbReference type="Pfam" id="PF00043">
    <property type="entry name" value="GST_C"/>
    <property type="match status" value="1"/>
</dbReference>
<dbReference type="Pfam" id="PF13409">
    <property type="entry name" value="GST_N_2"/>
    <property type="match status" value="1"/>
</dbReference>
<dbReference type="SFLD" id="SFLDS00019">
    <property type="entry name" value="Glutathione_Transferase_(cytos"/>
    <property type="match status" value="1"/>
</dbReference>
<dbReference type="SFLD" id="SFLDG00358">
    <property type="entry name" value="Main_(cytGST)"/>
    <property type="match status" value="1"/>
</dbReference>
<dbReference type="SUPFAM" id="SSF47616">
    <property type="entry name" value="GST C-terminal domain-like"/>
    <property type="match status" value="1"/>
</dbReference>
<dbReference type="SUPFAM" id="SSF52833">
    <property type="entry name" value="Thioredoxin-like"/>
    <property type="match status" value="1"/>
</dbReference>
<dbReference type="PROSITE" id="PS50405">
    <property type="entry name" value="GST_CTER"/>
    <property type="match status" value="1"/>
</dbReference>
<dbReference type="PROSITE" id="PS50404">
    <property type="entry name" value="GST_NTER"/>
    <property type="match status" value="1"/>
</dbReference>
<gene>
    <name evidence="6" type="primary">fzlA</name>
    <name evidence="8" type="ordered locus">CCNA_03754</name>
</gene>
<keyword id="KW-0002">3D-structure</keyword>
<keyword id="KW-0131">Cell cycle</keyword>
<keyword id="KW-0132">Cell division</keyword>
<keyword id="KW-0963">Cytoplasm</keyword>
<keyword id="KW-1185">Reference proteome</keyword>
<comment type="function">
    <text evidence="3 5">Essential cell division protein that must bind to FtsZ for division to occur (PubMed:20864042, PubMed:29119622). Critical coordinator of envelope constriction through its interaction with FtsZ (PubMed:29119622). Promotes the formation of highly curved FtsZ filaments, reduces the GTPase activity of FtsZ and stabilizes FtsZ polymers (PubMed:20864042). May regulate FtsZ function by modulating its superstructure (PubMed:20864042). Does not bind to glutathione (PubMed:20864042).</text>
</comment>
<comment type="subunit">
    <text evidence="3 5">Homodimer (PubMed:29119622). Interacts with FtsZ filaments (PubMed:20864042, PubMed:29119622). Probably interacts with the GTPase domain of FtsZ (PubMed:29119622).</text>
</comment>
<comment type="subcellular location">
    <subcellularLocation>
        <location evidence="4">Cytoplasm</location>
    </subcellularLocation>
    <text evidence="3">Colocalizes with FtsZ at the division site.</text>
</comment>
<comment type="induction">
    <text evidence="3">Cell cycle regulated at the transcript and protein levels. mRNA levels peak in predivisional cells.</text>
</comment>
<comment type="disruption phenotype">
    <text evidence="3">Deletion is lethal. Depletion results in cells that are elongated and grow into smooth filaments.</text>
</comment>
<comment type="similarity">
    <text evidence="7">Belongs to the GST superfamily.</text>
</comment>
<proteinExistence type="evidence at protein level"/>
<evidence type="ECO:0000255" key="1">
    <source>
        <dbReference type="PROSITE-ProRule" id="PRU00684"/>
    </source>
</evidence>
<evidence type="ECO:0000255" key="2">
    <source>
        <dbReference type="PROSITE-ProRule" id="PRU00685"/>
    </source>
</evidence>
<evidence type="ECO:0000269" key="3">
    <source>
    </source>
</evidence>
<evidence type="ECO:0000269" key="4">
    <source>
    </source>
</evidence>
<evidence type="ECO:0000269" key="5">
    <source>
    </source>
</evidence>
<evidence type="ECO:0000303" key="6">
    <source>
    </source>
</evidence>
<evidence type="ECO:0000305" key="7"/>
<evidence type="ECO:0000312" key="8">
    <source>
        <dbReference type="EMBL" id="ACL97219.2"/>
    </source>
</evidence>
<evidence type="ECO:0007744" key="9">
    <source>
        <dbReference type="PDB" id="5NR1"/>
    </source>
</evidence>
<evidence type="ECO:0007829" key="10">
    <source>
        <dbReference type="PDB" id="5NR1"/>
    </source>
</evidence>
<protein>
    <recommendedName>
        <fullName evidence="6">FtsZ-localized protein A</fullName>
    </recommendedName>
    <alternativeName>
        <fullName evidence="7">FtsZ-binding protein FzlA</fullName>
    </alternativeName>
</protein>
<name>FZLA_CAUVN</name>
<sequence length="228" mass="26574">MSVERTLHHFPLDPASRQVRLALGEKRLPFVEMQVRYWEMPPEFTSLNPSGMPPVLVETKHQRNLVICETRAILEHIEETETEPPLLGRDPAERAEARRLLQWFDRKFDNEVNGFLLHEKMEKRLLRMGAPDLAALRQGREALRMHLGYIESLLQTRDWLAGRRMSLADFAAAAHLSVIDYFGDVPWKDFQAAKTWYMKLKSRPCFRPILADRWPGLAPAAHYDDLDF</sequence>
<reference key="1">
    <citation type="journal article" date="2010" name="J. Bacteriol.">
        <title>The genetic basis of laboratory adaptation in Caulobacter crescentus.</title>
        <authorList>
            <person name="Marks M.E."/>
            <person name="Castro-Rojas C.M."/>
            <person name="Teiling C."/>
            <person name="Du L."/>
            <person name="Kapatral V."/>
            <person name="Walunas T.L."/>
            <person name="Crosson S."/>
        </authorList>
    </citation>
    <scope>NUCLEOTIDE SEQUENCE [LARGE SCALE GENOMIC DNA]</scope>
    <source>
        <strain>NA1000 / CB15N</strain>
    </source>
</reference>
<reference key="2">
    <citation type="journal article" date="2010" name="Mol. Cell">
        <title>Imaging-based identification of a critical regulator of FtsZ protofilament curvature in Caulobacter.</title>
        <authorList>
            <person name="Goley E.D."/>
            <person name="Dye N.A."/>
            <person name="Werner J.N."/>
            <person name="Gitai Z."/>
            <person name="Shapiro L."/>
        </authorList>
    </citation>
    <scope>FUNCTION</scope>
    <scope>INTERACTION WITH FTSZ</scope>
    <scope>SUBCELLULAR LOCATION</scope>
    <scope>INDUCTION</scope>
    <scope>DISRUPTION PHENOTYPE</scope>
    <source>
        <strain>NA1000 / CB15N</strain>
    </source>
</reference>
<reference key="3">
    <citation type="journal article" date="2016" name="Mol. Microbiol.">
        <title>A novel membrane anchor for FtsZ is linked to cell wall hydrolysis in Caulobacter crescentus.</title>
        <authorList>
            <person name="Meier E.L."/>
            <person name="Razavi S."/>
            <person name="Inoue T."/>
            <person name="Goley E.D."/>
        </authorList>
    </citation>
    <scope>SUBCELLULAR LOCATION</scope>
    <source>
        <strain>NA1000 / CB15N</strain>
    </source>
</reference>
<reference evidence="9" key="4">
    <citation type="journal article" date="2018" name="Mol. Microbiol.">
        <title>FzlA, an essential regulator of FtsZ filament curvature, controls constriction rate during Caulobacter division.</title>
        <authorList>
            <person name="Lariviere P.J."/>
            <person name="Szwedziak P."/>
            <person name="Mahone C.R."/>
            <person name="Lowe J."/>
            <person name="Goley E.D."/>
        </authorList>
    </citation>
    <scope>X-RAY CRYSTALLOGRAPHY (2.00 ANGSTROMS)</scope>
    <scope>FUNCTION</scope>
    <scope>SUBUNIT</scope>
    <scope>INTERACTION WITH FTSZ</scope>
    <source>
        <strain>NA1000 / CB15N</strain>
    </source>
</reference>